<organism>
    <name type="scientific">Mycobacterium marinum (strain ATCC BAA-535 / M)</name>
    <dbReference type="NCBI Taxonomy" id="216594"/>
    <lineage>
        <taxon>Bacteria</taxon>
        <taxon>Bacillati</taxon>
        <taxon>Actinomycetota</taxon>
        <taxon>Actinomycetes</taxon>
        <taxon>Mycobacteriales</taxon>
        <taxon>Mycobacteriaceae</taxon>
        <taxon>Mycobacterium</taxon>
        <taxon>Mycobacterium ulcerans group</taxon>
    </lineage>
</organism>
<reference key="1">
    <citation type="journal article" date="2008" name="Genome Res.">
        <title>Insights from the complete genome sequence of Mycobacterium marinum on the evolution of Mycobacterium tuberculosis.</title>
        <authorList>
            <person name="Stinear T.P."/>
            <person name="Seemann T."/>
            <person name="Harrison P.F."/>
            <person name="Jenkin G.A."/>
            <person name="Davies J.K."/>
            <person name="Johnson P.D."/>
            <person name="Abdellah Z."/>
            <person name="Arrowsmith C."/>
            <person name="Chillingworth T."/>
            <person name="Churcher C."/>
            <person name="Clarke K."/>
            <person name="Cronin A."/>
            <person name="Davis P."/>
            <person name="Goodhead I."/>
            <person name="Holroyd N."/>
            <person name="Jagels K."/>
            <person name="Lord A."/>
            <person name="Moule S."/>
            <person name="Mungall K."/>
            <person name="Norbertczak H."/>
            <person name="Quail M.A."/>
            <person name="Rabbinowitsch E."/>
            <person name="Walker D."/>
            <person name="White B."/>
            <person name="Whitehead S."/>
            <person name="Small P.L."/>
            <person name="Brosch R."/>
            <person name="Ramakrishnan L."/>
            <person name="Fischbach M.A."/>
            <person name="Parkhill J."/>
            <person name="Cole S.T."/>
        </authorList>
    </citation>
    <scope>NUCLEOTIDE SEQUENCE [LARGE SCALE GENOMIC DNA]</scope>
    <source>
        <strain>ATCC BAA-535 / M</strain>
    </source>
</reference>
<sequence>MSSDSRPPQPDTSTQSNSESESPAISSPTPQDHAPMTNRDWWPNQIDVSMLHPHPSQASPLGADFDYPKEFAKLDVDALKADVMSVMTTSQDWWPADYGHYGGLFIRMSWHAAGTYRIQDGRGGGGQGMQRFAPLNSWPDNVSLDKARRLLWPVKQKYGSKISWADLIIFAGNCALDSMGFKTFGFGFGREDVWQPEEVMWGEEDVWLGTDKRYSGKRDLAQPYGATTMGLIYVNPEGPEGKPDPVAAAHDIRETFARMAMNDEETAALIVGGHSFGKTHGAGDADLVGPEPEAAPIEQQGFGWKSSFGSGKGKDAITSGLEVVWTPTPTQWGNGFLELLYGYEWELTKSPAGAWQFTAKDGAGAGTIPDPFGGPGRAPTMLVTDISMREDPIYRRITQRWLEHPEELTEAFAKAWYKLLHRDMGPVSRYLGPWVAEPQLWQDPVPDVDHELVDAKDVAALKSKVLASGLTVAQLVKTAWSAASSFRRTDKRGGANGGRLRLEPQKSWESNEPADLDQVLSVLEGIQQDFNSSAAGGKKISLADLIVLAGSAAVEKAAKDGGHEVSVPFAPGRTDASQENTDVESFAVLEPRADGFRNYVRVGEKAPLEHLLIERAYRLGVTAPEMTVLVGGLRALGANHGGSKHGVFTDNPGVLSNDFFVNLLDMGTEWKASEAAENVYEGCDRSSGQLKWTATANDLVFGSNSVLRALAEVYAQSDAKQKFAEDFAAAWAKVMNNDRFDLE</sequence>
<keyword id="KW-0349">Heme</keyword>
<keyword id="KW-0376">Hydrogen peroxide</keyword>
<keyword id="KW-0408">Iron</keyword>
<keyword id="KW-0479">Metal-binding</keyword>
<keyword id="KW-0560">Oxidoreductase</keyword>
<keyword id="KW-0575">Peroxidase</keyword>
<keyword id="KW-1185">Reference proteome</keyword>
<comment type="function">
    <text evidence="1">Bifunctional enzyme with both catalase and broad-spectrum peroxidase activity.</text>
</comment>
<comment type="catalytic activity">
    <reaction evidence="1">
        <text>H2O2 + AH2 = A + 2 H2O</text>
        <dbReference type="Rhea" id="RHEA:30275"/>
        <dbReference type="ChEBI" id="CHEBI:13193"/>
        <dbReference type="ChEBI" id="CHEBI:15377"/>
        <dbReference type="ChEBI" id="CHEBI:16240"/>
        <dbReference type="ChEBI" id="CHEBI:17499"/>
        <dbReference type="EC" id="1.11.1.21"/>
    </reaction>
</comment>
<comment type="catalytic activity">
    <reaction evidence="1">
        <text>2 H2O2 = O2 + 2 H2O</text>
        <dbReference type="Rhea" id="RHEA:20309"/>
        <dbReference type="ChEBI" id="CHEBI:15377"/>
        <dbReference type="ChEBI" id="CHEBI:15379"/>
        <dbReference type="ChEBI" id="CHEBI:16240"/>
        <dbReference type="EC" id="1.11.1.21"/>
    </reaction>
</comment>
<comment type="cofactor">
    <cofactor evidence="1">
        <name>heme b</name>
        <dbReference type="ChEBI" id="CHEBI:60344"/>
    </cofactor>
    <text evidence="1">Binds 1 heme b (iron(II)-protoporphyrin IX) group per dimer.</text>
</comment>
<comment type="subunit">
    <text evidence="1">Homodimer or homotetramer.</text>
</comment>
<comment type="PTM">
    <text evidence="1">Formation of the three residue Trp-Tyr-Met cross-link is important for the catalase, but not the peroxidase activity of the enzyme.</text>
</comment>
<comment type="similarity">
    <text evidence="1">Belongs to the peroxidase family. Peroxidase/catalase subfamily.</text>
</comment>
<accession>B2HE73</accession>
<feature type="chain" id="PRO_0000354838" description="Catalase-peroxidase">
    <location>
        <begin position="1"/>
        <end position="743"/>
    </location>
</feature>
<feature type="region of interest" description="Disordered" evidence="2">
    <location>
        <begin position="1"/>
        <end position="40"/>
    </location>
</feature>
<feature type="region of interest" description="Disordered" evidence="2">
    <location>
        <begin position="490"/>
        <end position="511"/>
    </location>
</feature>
<feature type="compositionally biased region" description="Polar residues" evidence="2">
    <location>
        <begin position="1"/>
        <end position="15"/>
    </location>
</feature>
<feature type="compositionally biased region" description="Low complexity" evidence="2">
    <location>
        <begin position="16"/>
        <end position="28"/>
    </location>
</feature>
<feature type="active site" description="Proton acceptor" evidence="1">
    <location>
        <position position="111"/>
    </location>
</feature>
<feature type="binding site" description="axial binding residue" evidence="1">
    <location>
        <position position="274"/>
    </location>
    <ligand>
        <name>heme b</name>
        <dbReference type="ChEBI" id="CHEBI:60344"/>
    </ligand>
    <ligandPart>
        <name>Fe</name>
        <dbReference type="ChEBI" id="CHEBI:18248"/>
    </ligandPart>
</feature>
<feature type="site" description="Transition state stabilizer" evidence="1">
    <location>
        <position position="107"/>
    </location>
</feature>
<feature type="cross-link" description="Tryptophyl-tyrosyl-methioninium (Trp-Tyr) (with M-259)" evidence="1">
    <location>
        <begin position="110"/>
        <end position="233"/>
    </location>
</feature>
<feature type="cross-link" description="Tryptophyl-tyrosyl-methioninium (Tyr-Met) (with W-110)" evidence="1">
    <location>
        <begin position="233"/>
        <end position="259"/>
    </location>
</feature>
<proteinExistence type="inferred from homology"/>
<protein>
    <recommendedName>
        <fullName evidence="1">Catalase-peroxidase</fullName>
        <shortName evidence="1">CP</shortName>
        <ecNumber evidence="1">1.11.1.21</ecNumber>
    </recommendedName>
    <alternativeName>
        <fullName evidence="1">Peroxidase/catalase</fullName>
    </alternativeName>
</protein>
<name>KATG_MYCMM</name>
<gene>
    <name evidence="1" type="primary">katG</name>
    <name type="ordered locus">MMAR_2914</name>
</gene>
<evidence type="ECO:0000255" key="1">
    <source>
        <dbReference type="HAMAP-Rule" id="MF_01961"/>
    </source>
</evidence>
<evidence type="ECO:0000256" key="2">
    <source>
        <dbReference type="SAM" id="MobiDB-lite"/>
    </source>
</evidence>
<dbReference type="EC" id="1.11.1.21" evidence="1"/>
<dbReference type="EMBL" id="CP000854">
    <property type="protein sequence ID" value="ACC41353.1"/>
    <property type="molecule type" value="Genomic_DNA"/>
</dbReference>
<dbReference type="RefSeq" id="WP_012394612.1">
    <property type="nucleotide sequence ID" value="NC_010612.1"/>
</dbReference>
<dbReference type="SMR" id="B2HE73"/>
<dbReference type="STRING" id="216594.MMAR_2914"/>
<dbReference type="KEGG" id="mmi:MMAR_2914"/>
<dbReference type="eggNOG" id="COG0376">
    <property type="taxonomic scope" value="Bacteria"/>
</dbReference>
<dbReference type="HOGENOM" id="CLU_025424_2_0_11"/>
<dbReference type="OrthoDB" id="9759743at2"/>
<dbReference type="Proteomes" id="UP000001190">
    <property type="component" value="Chromosome"/>
</dbReference>
<dbReference type="GO" id="GO:0005829">
    <property type="term" value="C:cytosol"/>
    <property type="evidence" value="ECO:0007669"/>
    <property type="project" value="TreeGrafter"/>
</dbReference>
<dbReference type="GO" id="GO:0004096">
    <property type="term" value="F:catalase activity"/>
    <property type="evidence" value="ECO:0007669"/>
    <property type="project" value="UniProtKB-UniRule"/>
</dbReference>
<dbReference type="GO" id="GO:0020037">
    <property type="term" value="F:heme binding"/>
    <property type="evidence" value="ECO:0007669"/>
    <property type="project" value="InterPro"/>
</dbReference>
<dbReference type="GO" id="GO:0046872">
    <property type="term" value="F:metal ion binding"/>
    <property type="evidence" value="ECO:0007669"/>
    <property type="project" value="UniProtKB-KW"/>
</dbReference>
<dbReference type="GO" id="GO:0070301">
    <property type="term" value="P:cellular response to hydrogen peroxide"/>
    <property type="evidence" value="ECO:0007669"/>
    <property type="project" value="TreeGrafter"/>
</dbReference>
<dbReference type="GO" id="GO:0042744">
    <property type="term" value="P:hydrogen peroxide catabolic process"/>
    <property type="evidence" value="ECO:0007669"/>
    <property type="project" value="UniProtKB-KW"/>
</dbReference>
<dbReference type="CDD" id="cd08200">
    <property type="entry name" value="catalase_peroxidase_2"/>
    <property type="match status" value="1"/>
</dbReference>
<dbReference type="FunFam" id="1.10.420.10:FF:000002">
    <property type="entry name" value="Catalase-peroxidase"/>
    <property type="match status" value="1"/>
</dbReference>
<dbReference type="FunFam" id="1.10.420.10:FF:000004">
    <property type="entry name" value="Catalase-peroxidase"/>
    <property type="match status" value="1"/>
</dbReference>
<dbReference type="FunFam" id="1.10.520.10:FF:000002">
    <property type="entry name" value="Catalase-peroxidase"/>
    <property type="match status" value="1"/>
</dbReference>
<dbReference type="Gene3D" id="1.10.520.10">
    <property type="match status" value="2"/>
</dbReference>
<dbReference type="Gene3D" id="1.10.420.10">
    <property type="entry name" value="Peroxidase, domain 2"/>
    <property type="match status" value="2"/>
</dbReference>
<dbReference type="HAMAP" id="MF_01961">
    <property type="entry name" value="Catal_peroxid"/>
    <property type="match status" value="1"/>
</dbReference>
<dbReference type="InterPro" id="IPR000763">
    <property type="entry name" value="Catalase_peroxidase"/>
</dbReference>
<dbReference type="InterPro" id="IPR002016">
    <property type="entry name" value="Haem_peroxidase"/>
</dbReference>
<dbReference type="InterPro" id="IPR010255">
    <property type="entry name" value="Haem_peroxidase_sf"/>
</dbReference>
<dbReference type="InterPro" id="IPR019794">
    <property type="entry name" value="Peroxidases_AS"/>
</dbReference>
<dbReference type="InterPro" id="IPR019793">
    <property type="entry name" value="Peroxidases_heam-ligand_BS"/>
</dbReference>
<dbReference type="NCBIfam" id="TIGR00198">
    <property type="entry name" value="cat_per_HPI"/>
    <property type="match status" value="1"/>
</dbReference>
<dbReference type="NCBIfam" id="NF011635">
    <property type="entry name" value="PRK15061.1"/>
    <property type="match status" value="1"/>
</dbReference>
<dbReference type="PANTHER" id="PTHR30555:SF0">
    <property type="entry name" value="CATALASE-PEROXIDASE"/>
    <property type="match status" value="1"/>
</dbReference>
<dbReference type="PANTHER" id="PTHR30555">
    <property type="entry name" value="HYDROPEROXIDASE I, BIFUNCTIONAL CATALASE-PEROXIDASE"/>
    <property type="match status" value="1"/>
</dbReference>
<dbReference type="Pfam" id="PF00141">
    <property type="entry name" value="peroxidase"/>
    <property type="match status" value="2"/>
</dbReference>
<dbReference type="PRINTS" id="PR00460">
    <property type="entry name" value="BPEROXIDASE"/>
</dbReference>
<dbReference type="PRINTS" id="PR00458">
    <property type="entry name" value="PEROXIDASE"/>
</dbReference>
<dbReference type="SUPFAM" id="SSF48113">
    <property type="entry name" value="Heme-dependent peroxidases"/>
    <property type="match status" value="2"/>
</dbReference>
<dbReference type="PROSITE" id="PS00435">
    <property type="entry name" value="PEROXIDASE_1"/>
    <property type="match status" value="1"/>
</dbReference>
<dbReference type="PROSITE" id="PS00436">
    <property type="entry name" value="PEROXIDASE_2"/>
    <property type="match status" value="1"/>
</dbReference>
<dbReference type="PROSITE" id="PS50873">
    <property type="entry name" value="PEROXIDASE_4"/>
    <property type="match status" value="2"/>
</dbReference>